<protein>
    <recommendedName>
        <fullName>Cold shock protein CspA</fullName>
    </recommendedName>
</protein>
<reference key="1">
    <citation type="journal article" date="2007" name="PLoS ONE">
        <title>Molecular correlates of host specialization in Staphylococcus aureus.</title>
        <authorList>
            <person name="Herron-Olson L."/>
            <person name="Fitzgerald J.R."/>
            <person name="Musser J.M."/>
            <person name="Kapur V."/>
        </authorList>
    </citation>
    <scope>NUCLEOTIDE SEQUENCE [LARGE SCALE GENOMIC DNA]</scope>
    <source>
        <strain>bovine RF122 / ET3-1</strain>
    </source>
</reference>
<name>CSPA_STAAB</name>
<evidence type="ECO:0000250" key="1"/>
<proteinExistence type="inferred from homology"/>
<dbReference type="EMBL" id="AJ938182">
    <property type="protein sequence ID" value="CAI80947.1"/>
    <property type="molecule type" value="Genomic_DNA"/>
</dbReference>
<dbReference type="RefSeq" id="WP_000809131.1">
    <property type="nucleotide sequence ID" value="NC_007622.1"/>
</dbReference>
<dbReference type="SMR" id="Q2YY16"/>
<dbReference type="GeneID" id="98345769"/>
<dbReference type="KEGG" id="sab:SAB1258c"/>
<dbReference type="HOGENOM" id="CLU_117621_6_1_9"/>
<dbReference type="GO" id="GO:0005737">
    <property type="term" value="C:cytoplasm"/>
    <property type="evidence" value="ECO:0007669"/>
    <property type="project" value="UniProtKB-SubCell"/>
</dbReference>
<dbReference type="GO" id="GO:0003676">
    <property type="term" value="F:nucleic acid binding"/>
    <property type="evidence" value="ECO:0007669"/>
    <property type="project" value="InterPro"/>
</dbReference>
<dbReference type="CDD" id="cd04458">
    <property type="entry name" value="CSP_CDS"/>
    <property type="match status" value="1"/>
</dbReference>
<dbReference type="FunFam" id="2.40.50.140:FF:000006">
    <property type="entry name" value="Cold shock protein CspC"/>
    <property type="match status" value="1"/>
</dbReference>
<dbReference type="Gene3D" id="6.20.370.130">
    <property type="match status" value="1"/>
</dbReference>
<dbReference type="Gene3D" id="2.40.50.140">
    <property type="entry name" value="Nucleic acid-binding proteins"/>
    <property type="match status" value="1"/>
</dbReference>
<dbReference type="InterPro" id="IPR012156">
    <property type="entry name" value="Cold_shock_CspA"/>
</dbReference>
<dbReference type="InterPro" id="IPR050181">
    <property type="entry name" value="Cold_shock_domain"/>
</dbReference>
<dbReference type="InterPro" id="IPR011129">
    <property type="entry name" value="CSD"/>
</dbReference>
<dbReference type="InterPro" id="IPR019844">
    <property type="entry name" value="CSD_CS"/>
</dbReference>
<dbReference type="InterPro" id="IPR002059">
    <property type="entry name" value="CSP_DNA-bd"/>
</dbReference>
<dbReference type="InterPro" id="IPR012340">
    <property type="entry name" value="NA-bd_OB-fold"/>
</dbReference>
<dbReference type="PANTHER" id="PTHR11544">
    <property type="entry name" value="COLD SHOCK DOMAIN CONTAINING PROTEINS"/>
    <property type="match status" value="1"/>
</dbReference>
<dbReference type="Pfam" id="PF00313">
    <property type="entry name" value="CSD"/>
    <property type="match status" value="1"/>
</dbReference>
<dbReference type="PIRSF" id="PIRSF002599">
    <property type="entry name" value="Cold_shock_A"/>
    <property type="match status" value="1"/>
</dbReference>
<dbReference type="PRINTS" id="PR00050">
    <property type="entry name" value="COLDSHOCK"/>
</dbReference>
<dbReference type="SMART" id="SM00357">
    <property type="entry name" value="CSP"/>
    <property type="match status" value="1"/>
</dbReference>
<dbReference type="SUPFAM" id="SSF50249">
    <property type="entry name" value="Nucleic acid-binding proteins"/>
    <property type="match status" value="1"/>
</dbReference>
<dbReference type="PROSITE" id="PS00352">
    <property type="entry name" value="CSD_1"/>
    <property type="match status" value="1"/>
</dbReference>
<dbReference type="PROSITE" id="PS51857">
    <property type="entry name" value="CSD_2"/>
    <property type="match status" value="1"/>
</dbReference>
<sequence length="66" mass="7321">MKQGTVKWFNAEKGFGFIEVEGENDVFVHFSAINQDGYKSLEEGQAVEFEVVEGDRGPQAANVVKL</sequence>
<accession>Q2YY16</accession>
<feature type="chain" id="PRO_0000262540" description="Cold shock protein CspA">
    <location>
        <begin position="1"/>
        <end position="66"/>
    </location>
</feature>
<feature type="domain" description="CSD">
    <location>
        <begin position="1"/>
        <end position="66"/>
    </location>
</feature>
<organism>
    <name type="scientific">Staphylococcus aureus (strain bovine RF122 / ET3-1)</name>
    <dbReference type="NCBI Taxonomy" id="273036"/>
    <lineage>
        <taxon>Bacteria</taxon>
        <taxon>Bacillati</taxon>
        <taxon>Bacillota</taxon>
        <taxon>Bacilli</taxon>
        <taxon>Bacillales</taxon>
        <taxon>Staphylococcaceae</taxon>
        <taxon>Staphylococcus</taxon>
    </lineage>
</organism>
<keyword id="KW-0963">Cytoplasm</keyword>
<gene>
    <name type="primary">cspA</name>
    <name type="ordered locus">SAB1258c</name>
</gene>
<comment type="function">
    <text evidence="1">Involved in cold stress response.</text>
</comment>
<comment type="subcellular location">
    <subcellularLocation>
        <location evidence="1">Cytoplasm</location>
    </subcellularLocation>
</comment>